<keyword id="KW-0067">ATP-binding</keyword>
<keyword id="KW-0342">GTP-binding</keyword>
<keyword id="KW-0547">Nucleotide-binding</keyword>
<keyword id="KW-1185">Reference proteome</keyword>
<accession>A9KSS4</accession>
<evidence type="ECO:0000255" key="1">
    <source>
        <dbReference type="HAMAP-Rule" id="MF_00636"/>
    </source>
</evidence>
<evidence type="ECO:0000305" key="2"/>
<dbReference type="EMBL" id="CP000885">
    <property type="protein sequence ID" value="ABX40718.1"/>
    <property type="status" value="ALT_INIT"/>
    <property type="molecule type" value="Genomic_DNA"/>
</dbReference>
<dbReference type="RefSeq" id="WP_041703843.1">
    <property type="nucleotide sequence ID" value="NC_010001.1"/>
</dbReference>
<dbReference type="SMR" id="A9KSS4"/>
<dbReference type="STRING" id="357809.Cphy_0331"/>
<dbReference type="KEGG" id="cpy:Cphy_0331"/>
<dbReference type="eggNOG" id="COG1660">
    <property type="taxonomic scope" value="Bacteria"/>
</dbReference>
<dbReference type="HOGENOM" id="CLU_059558_0_0_9"/>
<dbReference type="OrthoDB" id="9784461at2"/>
<dbReference type="Proteomes" id="UP000000370">
    <property type="component" value="Chromosome"/>
</dbReference>
<dbReference type="GO" id="GO:0005524">
    <property type="term" value="F:ATP binding"/>
    <property type="evidence" value="ECO:0007669"/>
    <property type="project" value="UniProtKB-UniRule"/>
</dbReference>
<dbReference type="GO" id="GO:0005525">
    <property type="term" value="F:GTP binding"/>
    <property type="evidence" value="ECO:0007669"/>
    <property type="project" value="UniProtKB-UniRule"/>
</dbReference>
<dbReference type="Gene3D" id="3.40.50.300">
    <property type="entry name" value="P-loop containing nucleotide triphosphate hydrolases"/>
    <property type="match status" value="1"/>
</dbReference>
<dbReference type="HAMAP" id="MF_00636">
    <property type="entry name" value="RapZ_like"/>
    <property type="match status" value="1"/>
</dbReference>
<dbReference type="InterPro" id="IPR027417">
    <property type="entry name" value="P-loop_NTPase"/>
</dbReference>
<dbReference type="InterPro" id="IPR005337">
    <property type="entry name" value="RapZ-like"/>
</dbReference>
<dbReference type="InterPro" id="IPR053930">
    <property type="entry name" value="RapZ-like_N"/>
</dbReference>
<dbReference type="InterPro" id="IPR053931">
    <property type="entry name" value="RapZ_C"/>
</dbReference>
<dbReference type="NCBIfam" id="NF003828">
    <property type="entry name" value="PRK05416.1"/>
    <property type="match status" value="1"/>
</dbReference>
<dbReference type="PANTHER" id="PTHR30448">
    <property type="entry name" value="RNASE ADAPTER PROTEIN RAPZ"/>
    <property type="match status" value="1"/>
</dbReference>
<dbReference type="PANTHER" id="PTHR30448:SF0">
    <property type="entry name" value="RNASE ADAPTER PROTEIN RAPZ"/>
    <property type="match status" value="1"/>
</dbReference>
<dbReference type="Pfam" id="PF22740">
    <property type="entry name" value="PapZ_C"/>
    <property type="match status" value="1"/>
</dbReference>
<dbReference type="Pfam" id="PF03668">
    <property type="entry name" value="RapZ-like_N"/>
    <property type="match status" value="1"/>
</dbReference>
<dbReference type="PIRSF" id="PIRSF005052">
    <property type="entry name" value="P-loopkin"/>
    <property type="match status" value="1"/>
</dbReference>
<dbReference type="SUPFAM" id="SSF52540">
    <property type="entry name" value="P-loop containing nucleoside triphosphate hydrolases"/>
    <property type="match status" value="1"/>
</dbReference>
<gene>
    <name type="ordered locus">Cphy_0331</name>
</gene>
<feature type="chain" id="PRO_0000383228" description="Nucleotide-binding protein Cphy_0331">
    <location>
        <begin position="1"/>
        <end position="285"/>
    </location>
</feature>
<feature type="binding site" evidence="1">
    <location>
        <begin position="8"/>
        <end position="15"/>
    </location>
    <ligand>
        <name>ATP</name>
        <dbReference type="ChEBI" id="CHEBI:30616"/>
    </ligand>
</feature>
<feature type="binding site" evidence="1">
    <location>
        <begin position="59"/>
        <end position="62"/>
    </location>
    <ligand>
        <name>GTP</name>
        <dbReference type="ChEBI" id="CHEBI:37565"/>
    </ligand>
</feature>
<name>Y331_LACP7</name>
<proteinExistence type="inferred from homology"/>
<comment type="function">
    <text evidence="1">Displays ATPase and GTPase activities.</text>
</comment>
<comment type="similarity">
    <text evidence="1">Belongs to the RapZ-like family.</text>
</comment>
<comment type="sequence caution" evidence="2">
    <conflict type="erroneous initiation">
        <sequence resource="EMBL-CDS" id="ABX40718"/>
    </conflict>
</comment>
<organism>
    <name type="scientific">Lachnoclostridium phytofermentans (strain ATCC 700394 / DSM 18823 / ISDg)</name>
    <name type="common">Clostridium phytofermentans</name>
    <dbReference type="NCBI Taxonomy" id="357809"/>
    <lineage>
        <taxon>Bacteria</taxon>
        <taxon>Bacillati</taxon>
        <taxon>Bacillota</taxon>
        <taxon>Clostridia</taxon>
        <taxon>Lachnospirales</taxon>
        <taxon>Lachnospiraceae</taxon>
    </lineage>
</organism>
<protein>
    <recommendedName>
        <fullName evidence="1">Nucleotide-binding protein Cphy_0331</fullName>
    </recommendedName>
</protein>
<sequence length="285" mass="32399">MRFVIVTGMSGAGKSSVLKMLEDSSYFCVDNLPIPFIMKFARLAVKESANITKVALGIDIRSGQALEELGKVLEDVKSAGYQYEILFLEASTEILVKRYKETRRMHPLSGTGRVDKGIELERRKLRFLKERADYIIDTSRLLVRELKTEIDNIFVQDGTYRNFFITVLSFGFKYGLPNDADLVFDVRFLQNPYYVPKLKSKTGNEPEVRDFVLSLEQAEEFLTKLMDMLLFLIPNYIAEGKNQLVIGIGCTGGRHRSVTLANEITKRLSATEYGVKAEHRDVEKG</sequence>
<reference key="1">
    <citation type="submission" date="2007-11" db="EMBL/GenBank/DDBJ databases">
        <title>Complete genome sequence of Clostridium phytofermentans ISDg.</title>
        <authorList>
            <person name="Leschine S.B."/>
            <person name="Warnick T.A."/>
            <person name="Blanchard J.L."/>
            <person name="Schnell D.J."/>
            <person name="Petit E.L."/>
            <person name="LaTouf W.G."/>
            <person name="Copeland A."/>
            <person name="Lucas S."/>
            <person name="Lapidus A."/>
            <person name="Barry K."/>
            <person name="Glavina del Rio T."/>
            <person name="Dalin E."/>
            <person name="Tice H."/>
            <person name="Pitluck S."/>
            <person name="Kiss H."/>
            <person name="Brettin T."/>
            <person name="Bruce D."/>
            <person name="Detter J.C."/>
            <person name="Han C."/>
            <person name="Kuske C."/>
            <person name="Schmutz J."/>
            <person name="Larimer F."/>
            <person name="Land M."/>
            <person name="Hauser L."/>
            <person name="Kyrpides N."/>
            <person name="Kim E.A."/>
            <person name="Richardson P."/>
        </authorList>
    </citation>
    <scope>NUCLEOTIDE SEQUENCE [LARGE SCALE GENOMIC DNA]</scope>
    <source>
        <strain>ATCC 700394 / DSM 18823 / ISDg</strain>
    </source>
</reference>